<feature type="chain" id="PRO_0000187748" description="Peptidyl-tRNA hydrolase">
    <location>
        <begin position="1"/>
        <end position="223"/>
    </location>
</feature>
<feature type="active site" description="Proton acceptor" evidence="1">
    <location>
        <position position="21"/>
    </location>
</feature>
<feature type="binding site" evidence="1">
    <location>
        <position position="16"/>
    </location>
    <ligand>
        <name>tRNA</name>
        <dbReference type="ChEBI" id="CHEBI:17843"/>
    </ligand>
</feature>
<feature type="binding site" evidence="1">
    <location>
        <position position="67"/>
    </location>
    <ligand>
        <name>tRNA</name>
        <dbReference type="ChEBI" id="CHEBI:17843"/>
    </ligand>
</feature>
<feature type="binding site" evidence="1">
    <location>
        <position position="69"/>
    </location>
    <ligand>
        <name>tRNA</name>
        <dbReference type="ChEBI" id="CHEBI:17843"/>
    </ligand>
</feature>
<feature type="binding site" evidence="1">
    <location>
        <position position="113"/>
    </location>
    <ligand>
        <name>tRNA</name>
        <dbReference type="ChEBI" id="CHEBI:17843"/>
    </ligand>
</feature>
<feature type="site" description="Discriminates between blocked and unblocked aminoacyl-tRNA" evidence="1">
    <location>
        <position position="11"/>
    </location>
</feature>
<feature type="site" description="Stabilizes the basic form of H active site to accept a proton" evidence="1">
    <location>
        <position position="92"/>
    </location>
</feature>
<comment type="function">
    <text evidence="1">Hydrolyzes ribosome-free peptidyl-tRNAs (with 1 or more amino acids incorporated), which drop off the ribosome during protein synthesis, or as a result of ribosome stalling.</text>
</comment>
<comment type="function">
    <text evidence="1">Catalyzes the release of premature peptidyl moieties from peptidyl-tRNA molecules trapped in stalled 50S ribosomal subunits, and thus maintains levels of free tRNAs and 50S ribosomes.</text>
</comment>
<comment type="catalytic activity">
    <reaction evidence="1">
        <text>an N-acyl-L-alpha-aminoacyl-tRNA + H2O = an N-acyl-L-amino acid + a tRNA + H(+)</text>
        <dbReference type="Rhea" id="RHEA:54448"/>
        <dbReference type="Rhea" id="RHEA-COMP:10123"/>
        <dbReference type="Rhea" id="RHEA-COMP:13883"/>
        <dbReference type="ChEBI" id="CHEBI:15377"/>
        <dbReference type="ChEBI" id="CHEBI:15378"/>
        <dbReference type="ChEBI" id="CHEBI:59874"/>
        <dbReference type="ChEBI" id="CHEBI:78442"/>
        <dbReference type="ChEBI" id="CHEBI:138191"/>
        <dbReference type="EC" id="3.1.1.29"/>
    </reaction>
</comment>
<comment type="subunit">
    <text evidence="1">Monomer.</text>
</comment>
<comment type="subcellular location">
    <subcellularLocation>
        <location evidence="1">Cytoplasm</location>
    </subcellularLocation>
</comment>
<comment type="similarity">
    <text evidence="1">Belongs to the PTH family.</text>
</comment>
<sequence length="223" mass="25374">MPCLLVAGLGNPSAKYQNTRHNIGFMVLDFLSKELDFDFSFDKKFNAEVGAINIGPHKVFFLKPQTFMNLSGEAINPFVRYFDITHTFVIHDDIDIGFGDMRFKYGGSSGGHNGLKSIDSFMGDTYFRLRFGVGRSANKNVVEYVLSDFNAQEREQLEGLIAHAKEAVMSFCNMAQYPKEHILTHLQQYFTLKIPKLTPSQTQNNESFATQFSQMQYTRFTQG</sequence>
<accession>Q7VG29</accession>
<reference key="1">
    <citation type="journal article" date="2003" name="Proc. Natl. Acad. Sci. U.S.A.">
        <title>The complete genome sequence of the carcinogenic bacterium Helicobacter hepaticus.</title>
        <authorList>
            <person name="Suerbaum S."/>
            <person name="Josenhans C."/>
            <person name="Sterzenbach T."/>
            <person name="Drescher B."/>
            <person name="Brandt P."/>
            <person name="Bell M."/>
            <person name="Droege M."/>
            <person name="Fartmann B."/>
            <person name="Fischer H.-P."/>
            <person name="Ge Z."/>
            <person name="Hoerster A."/>
            <person name="Holland R."/>
            <person name="Klein K."/>
            <person name="Koenig J."/>
            <person name="Macko L."/>
            <person name="Mendz G.L."/>
            <person name="Nyakatura G."/>
            <person name="Schauer D.B."/>
            <person name="Shen Z."/>
            <person name="Weber J."/>
            <person name="Frosch M."/>
            <person name="Fox J.G."/>
        </authorList>
    </citation>
    <scope>NUCLEOTIDE SEQUENCE [LARGE SCALE GENOMIC DNA]</scope>
    <source>
        <strain>ATCC 51449 / 3B1</strain>
    </source>
</reference>
<evidence type="ECO:0000255" key="1">
    <source>
        <dbReference type="HAMAP-Rule" id="MF_00083"/>
    </source>
</evidence>
<organism>
    <name type="scientific">Helicobacter hepaticus (strain ATCC 51449 / 3B1)</name>
    <dbReference type="NCBI Taxonomy" id="235279"/>
    <lineage>
        <taxon>Bacteria</taxon>
        <taxon>Pseudomonadati</taxon>
        <taxon>Campylobacterota</taxon>
        <taxon>Epsilonproteobacteria</taxon>
        <taxon>Campylobacterales</taxon>
        <taxon>Helicobacteraceae</taxon>
        <taxon>Helicobacter</taxon>
    </lineage>
</organism>
<name>PTH_HELHP</name>
<keyword id="KW-0963">Cytoplasm</keyword>
<keyword id="KW-0378">Hydrolase</keyword>
<keyword id="KW-1185">Reference proteome</keyword>
<keyword id="KW-0694">RNA-binding</keyword>
<keyword id="KW-0820">tRNA-binding</keyword>
<protein>
    <recommendedName>
        <fullName evidence="1">Peptidyl-tRNA hydrolase</fullName>
        <shortName evidence="1">Pth</shortName>
        <ecNumber evidence="1">3.1.1.29</ecNumber>
    </recommendedName>
</protein>
<proteinExistence type="inferred from homology"/>
<dbReference type="EC" id="3.1.1.29" evidence="1"/>
<dbReference type="EMBL" id="AE017125">
    <property type="protein sequence ID" value="AAP78092.1"/>
    <property type="molecule type" value="Genomic_DNA"/>
</dbReference>
<dbReference type="RefSeq" id="WP_011116335.1">
    <property type="nucleotide sequence ID" value="NC_004917.1"/>
</dbReference>
<dbReference type="SMR" id="Q7VG29"/>
<dbReference type="STRING" id="235279.HH_1495"/>
<dbReference type="KEGG" id="hhe:HH_1495"/>
<dbReference type="eggNOG" id="COG0193">
    <property type="taxonomic scope" value="Bacteria"/>
</dbReference>
<dbReference type="HOGENOM" id="CLU_062456_1_1_7"/>
<dbReference type="OrthoDB" id="9800507at2"/>
<dbReference type="Proteomes" id="UP000002495">
    <property type="component" value="Chromosome"/>
</dbReference>
<dbReference type="GO" id="GO:0005737">
    <property type="term" value="C:cytoplasm"/>
    <property type="evidence" value="ECO:0007669"/>
    <property type="project" value="UniProtKB-SubCell"/>
</dbReference>
<dbReference type="GO" id="GO:0004045">
    <property type="term" value="F:peptidyl-tRNA hydrolase activity"/>
    <property type="evidence" value="ECO:0007669"/>
    <property type="project" value="UniProtKB-UniRule"/>
</dbReference>
<dbReference type="GO" id="GO:0000049">
    <property type="term" value="F:tRNA binding"/>
    <property type="evidence" value="ECO:0007669"/>
    <property type="project" value="UniProtKB-UniRule"/>
</dbReference>
<dbReference type="GO" id="GO:0006515">
    <property type="term" value="P:protein quality control for misfolded or incompletely synthesized proteins"/>
    <property type="evidence" value="ECO:0007669"/>
    <property type="project" value="UniProtKB-UniRule"/>
</dbReference>
<dbReference type="GO" id="GO:0072344">
    <property type="term" value="P:rescue of stalled ribosome"/>
    <property type="evidence" value="ECO:0007669"/>
    <property type="project" value="UniProtKB-UniRule"/>
</dbReference>
<dbReference type="CDD" id="cd00462">
    <property type="entry name" value="PTH"/>
    <property type="match status" value="1"/>
</dbReference>
<dbReference type="FunFam" id="3.40.50.1470:FF:000001">
    <property type="entry name" value="Peptidyl-tRNA hydrolase"/>
    <property type="match status" value="1"/>
</dbReference>
<dbReference type="Gene3D" id="3.40.50.1470">
    <property type="entry name" value="Peptidyl-tRNA hydrolase"/>
    <property type="match status" value="1"/>
</dbReference>
<dbReference type="HAMAP" id="MF_00083">
    <property type="entry name" value="Pept_tRNA_hydro_bact"/>
    <property type="match status" value="1"/>
</dbReference>
<dbReference type="InterPro" id="IPR001328">
    <property type="entry name" value="Pept_tRNA_hydro"/>
</dbReference>
<dbReference type="InterPro" id="IPR018171">
    <property type="entry name" value="Pept_tRNA_hydro_CS"/>
</dbReference>
<dbReference type="InterPro" id="IPR036416">
    <property type="entry name" value="Pept_tRNA_hydro_sf"/>
</dbReference>
<dbReference type="NCBIfam" id="TIGR00447">
    <property type="entry name" value="pth"/>
    <property type="match status" value="1"/>
</dbReference>
<dbReference type="PANTHER" id="PTHR17224">
    <property type="entry name" value="PEPTIDYL-TRNA HYDROLASE"/>
    <property type="match status" value="1"/>
</dbReference>
<dbReference type="PANTHER" id="PTHR17224:SF1">
    <property type="entry name" value="PEPTIDYL-TRNA HYDROLASE"/>
    <property type="match status" value="1"/>
</dbReference>
<dbReference type="Pfam" id="PF01195">
    <property type="entry name" value="Pept_tRNA_hydro"/>
    <property type="match status" value="1"/>
</dbReference>
<dbReference type="SUPFAM" id="SSF53178">
    <property type="entry name" value="Peptidyl-tRNA hydrolase-like"/>
    <property type="match status" value="1"/>
</dbReference>
<dbReference type="PROSITE" id="PS01195">
    <property type="entry name" value="PEPT_TRNA_HYDROL_1"/>
    <property type="match status" value="1"/>
</dbReference>
<dbReference type="PROSITE" id="PS01196">
    <property type="entry name" value="PEPT_TRNA_HYDROL_2"/>
    <property type="match status" value="1"/>
</dbReference>
<gene>
    <name evidence="1" type="primary">pth</name>
    <name type="ordered locus">HH_1495</name>
</gene>